<keyword id="KW-0687">Ribonucleoprotein</keyword>
<keyword id="KW-0689">Ribosomal protein</keyword>
<dbReference type="EMBL" id="FM178379">
    <property type="protein sequence ID" value="CAQ78575.1"/>
    <property type="molecule type" value="Genomic_DNA"/>
</dbReference>
<dbReference type="RefSeq" id="WP_012549673.1">
    <property type="nucleotide sequence ID" value="NC_011312.1"/>
</dbReference>
<dbReference type="SMR" id="B6EHZ6"/>
<dbReference type="KEGG" id="vsa:VSAL_I0890"/>
<dbReference type="eggNOG" id="COG0254">
    <property type="taxonomic scope" value="Bacteria"/>
</dbReference>
<dbReference type="HOGENOM" id="CLU_114306_2_2_6"/>
<dbReference type="Proteomes" id="UP000001730">
    <property type="component" value="Chromosome 1"/>
</dbReference>
<dbReference type="GO" id="GO:1990904">
    <property type="term" value="C:ribonucleoprotein complex"/>
    <property type="evidence" value="ECO:0007669"/>
    <property type="project" value="UniProtKB-KW"/>
</dbReference>
<dbReference type="GO" id="GO:0005840">
    <property type="term" value="C:ribosome"/>
    <property type="evidence" value="ECO:0007669"/>
    <property type="project" value="UniProtKB-KW"/>
</dbReference>
<dbReference type="GO" id="GO:0003735">
    <property type="term" value="F:structural constituent of ribosome"/>
    <property type="evidence" value="ECO:0007669"/>
    <property type="project" value="InterPro"/>
</dbReference>
<dbReference type="GO" id="GO:0006412">
    <property type="term" value="P:translation"/>
    <property type="evidence" value="ECO:0007669"/>
    <property type="project" value="UniProtKB-UniRule"/>
</dbReference>
<dbReference type="Gene3D" id="4.10.830.30">
    <property type="entry name" value="Ribosomal protein L31"/>
    <property type="match status" value="1"/>
</dbReference>
<dbReference type="HAMAP" id="MF_00502">
    <property type="entry name" value="Ribosomal_bL31_2"/>
    <property type="match status" value="1"/>
</dbReference>
<dbReference type="InterPro" id="IPR034704">
    <property type="entry name" value="Ribosomal_bL28/bL31-like_sf"/>
</dbReference>
<dbReference type="InterPro" id="IPR002150">
    <property type="entry name" value="Ribosomal_bL31"/>
</dbReference>
<dbReference type="InterPro" id="IPR027493">
    <property type="entry name" value="Ribosomal_bL31_B"/>
</dbReference>
<dbReference type="InterPro" id="IPR042105">
    <property type="entry name" value="Ribosomal_bL31_sf"/>
</dbReference>
<dbReference type="NCBIfam" id="TIGR00105">
    <property type="entry name" value="L31"/>
    <property type="match status" value="1"/>
</dbReference>
<dbReference type="NCBIfam" id="NF002462">
    <property type="entry name" value="PRK01678.1"/>
    <property type="match status" value="1"/>
</dbReference>
<dbReference type="PANTHER" id="PTHR33280">
    <property type="entry name" value="50S RIBOSOMAL PROTEIN L31, CHLOROPLASTIC"/>
    <property type="match status" value="1"/>
</dbReference>
<dbReference type="PANTHER" id="PTHR33280:SF1">
    <property type="entry name" value="LARGE RIBOSOMAL SUBUNIT PROTEIN BL31C"/>
    <property type="match status" value="1"/>
</dbReference>
<dbReference type="Pfam" id="PF01197">
    <property type="entry name" value="Ribosomal_L31"/>
    <property type="match status" value="1"/>
</dbReference>
<dbReference type="PRINTS" id="PR01249">
    <property type="entry name" value="RIBOSOMALL31"/>
</dbReference>
<dbReference type="SUPFAM" id="SSF143800">
    <property type="entry name" value="L28p-like"/>
    <property type="match status" value="1"/>
</dbReference>
<dbReference type="PROSITE" id="PS01143">
    <property type="entry name" value="RIBOSOMAL_L31"/>
    <property type="match status" value="1"/>
</dbReference>
<sequence>MKEGIHPTYRKVLFHDTSVNKYFLIGSTLQTDRTMKWEDGKEYPYMTLDISSESHPFYTGEQRVVSTEGRVANFNRRFGALKGKV</sequence>
<accession>B6EHZ6</accession>
<evidence type="ECO:0000255" key="1">
    <source>
        <dbReference type="HAMAP-Rule" id="MF_00502"/>
    </source>
</evidence>
<evidence type="ECO:0000305" key="2"/>
<proteinExistence type="inferred from homology"/>
<protein>
    <recommendedName>
        <fullName evidence="1">Large ribosomal subunit protein bL31B</fullName>
    </recommendedName>
    <alternativeName>
        <fullName evidence="2">50S ribosomal protein L31 type B</fullName>
    </alternativeName>
</protein>
<gene>
    <name evidence="1" type="primary">rpmE2</name>
    <name type="ordered locus">VSAL_I0890</name>
</gene>
<name>RL31B_ALISL</name>
<comment type="subunit">
    <text evidence="1">Part of the 50S ribosomal subunit.</text>
</comment>
<comment type="similarity">
    <text evidence="1">Belongs to the bacterial ribosomal protein bL31 family. Type B subfamily.</text>
</comment>
<feature type="chain" id="PRO_1000126781" description="Large ribosomal subunit protein bL31B">
    <location>
        <begin position="1"/>
        <end position="85"/>
    </location>
</feature>
<organism>
    <name type="scientific">Aliivibrio salmonicida (strain LFI1238)</name>
    <name type="common">Vibrio salmonicida (strain LFI1238)</name>
    <dbReference type="NCBI Taxonomy" id="316275"/>
    <lineage>
        <taxon>Bacteria</taxon>
        <taxon>Pseudomonadati</taxon>
        <taxon>Pseudomonadota</taxon>
        <taxon>Gammaproteobacteria</taxon>
        <taxon>Vibrionales</taxon>
        <taxon>Vibrionaceae</taxon>
        <taxon>Aliivibrio</taxon>
    </lineage>
</organism>
<reference key="1">
    <citation type="journal article" date="2008" name="BMC Genomics">
        <title>The genome sequence of the fish pathogen Aliivibrio salmonicida strain LFI1238 shows extensive evidence of gene decay.</title>
        <authorList>
            <person name="Hjerde E."/>
            <person name="Lorentzen M.S."/>
            <person name="Holden M.T."/>
            <person name="Seeger K."/>
            <person name="Paulsen S."/>
            <person name="Bason N."/>
            <person name="Churcher C."/>
            <person name="Harris D."/>
            <person name="Norbertczak H."/>
            <person name="Quail M.A."/>
            <person name="Sanders S."/>
            <person name="Thurston S."/>
            <person name="Parkhill J."/>
            <person name="Willassen N.P."/>
            <person name="Thomson N.R."/>
        </authorList>
    </citation>
    <scope>NUCLEOTIDE SEQUENCE [LARGE SCALE GENOMIC DNA]</scope>
    <source>
        <strain>LFI1238</strain>
    </source>
</reference>